<gene>
    <name evidence="1" type="primary">apt</name>
    <name type="ordered locus">Ava_2470</name>
</gene>
<protein>
    <recommendedName>
        <fullName evidence="1">Adenine phosphoribosyltransferase</fullName>
        <shortName evidence="1">APRT</shortName>
        <ecNumber evidence="1">2.4.2.7</ecNumber>
    </recommendedName>
</protein>
<organism>
    <name type="scientific">Trichormus variabilis (strain ATCC 29413 / PCC 7937)</name>
    <name type="common">Anabaena variabilis</name>
    <dbReference type="NCBI Taxonomy" id="240292"/>
    <lineage>
        <taxon>Bacteria</taxon>
        <taxon>Bacillati</taxon>
        <taxon>Cyanobacteriota</taxon>
        <taxon>Cyanophyceae</taxon>
        <taxon>Nostocales</taxon>
        <taxon>Nostocaceae</taxon>
        <taxon>Trichormus</taxon>
    </lineage>
</organism>
<feature type="chain" id="PRO_1000000254" description="Adenine phosphoribosyltransferase">
    <location>
        <begin position="1"/>
        <end position="172"/>
    </location>
</feature>
<evidence type="ECO:0000255" key="1">
    <source>
        <dbReference type="HAMAP-Rule" id="MF_00004"/>
    </source>
</evidence>
<proteinExistence type="inferred from homology"/>
<sequence>MDLKSLIRDIPDFPKPGILFRDITTLLRDRQGLRYTIDFLAEKCFEANLDIDYVIGMESRGFIFGTPLAYKLGAGFIPVRKKGKLPAAVHSIEYELEYGTDCLEVHRDALHPDSRVLIVDDLIATGGTASATAKLVQQIGCELVGFGFIIELRDLQGRKHLPDVPIISLVEY</sequence>
<name>APT_TRIV2</name>
<reference key="1">
    <citation type="journal article" date="2014" name="Stand. Genomic Sci.">
        <title>Complete genome sequence of Anabaena variabilis ATCC 29413.</title>
        <authorList>
            <person name="Thiel T."/>
            <person name="Pratte B.S."/>
            <person name="Zhong J."/>
            <person name="Goodwin L."/>
            <person name="Copeland A."/>
            <person name="Lucas S."/>
            <person name="Han C."/>
            <person name="Pitluck S."/>
            <person name="Land M.L."/>
            <person name="Kyrpides N.C."/>
            <person name="Woyke T."/>
        </authorList>
    </citation>
    <scope>NUCLEOTIDE SEQUENCE [LARGE SCALE GENOMIC DNA]</scope>
    <source>
        <strain>ATCC 29413 / PCC 7937</strain>
    </source>
</reference>
<accession>Q3MAA1</accession>
<keyword id="KW-0963">Cytoplasm</keyword>
<keyword id="KW-0328">Glycosyltransferase</keyword>
<keyword id="KW-0660">Purine salvage</keyword>
<keyword id="KW-0808">Transferase</keyword>
<comment type="function">
    <text evidence="1">Catalyzes a salvage reaction resulting in the formation of AMP, that is energically less costly than de novo synthesis.</text>
</comment>
<comment type="catalytic activity">
    <reaction evidence="1">
        <text>AMP + diphosphate = 5-phospho-alpha-D-ribose 1-diphosphate + adenine</text>
        <dbReference type="Rhea" id="RHEA:16609"/>
        <dbReference type="ChEBI" id="CHEBI:16708"/>
        <dbReference type="ChEBI" id="CHEBI:33019"/>
        <dbReference type="ChEBI" id="CHEBI:58017"/>
        <dbReference type="ChEBI" id="CHEBI:456215"/>
        <dbReference type="EC" id="2.4.2.7"/>
    </reaction>
</comment>
<comment type="pathway">
    <text evidence="1">Purine metabolism; AMP biosynthesis via salvage pathway; AMP from adenine: step 1/1.</text>
</comment>
<comment type="subunit">
    <text evidence="1">Homodimer.</text>
</comment>
<comment type="subcellular location">
    <subcellularLocation>
        <location evidence="1">Cytoplasm</location>
    </subcellularLocation>
</comment>
<comment type="similarity">
    <text evidence="1">Belongs to the purine/pyrimidine phosphoribosyltransferase family.</text>
</comment>
<dbReference type="EC" id="2.4.2.7" evidence="1"/>
<dbReference type="EMBL" id="CP000117">
    <property type="protein sequence ID" value="ABA22085.1"/>
    <property type="molecule type" value="Genomic_DNA"/>
</dbReference>
<dbReference type="SMR" id="Q3MAA1"/>
<dbReference type="STRING" id="240292.Ava_2470"/>
<dbReference type="KEGG" id="ava:Ava_2470"/>
<dbReference type="eggNOG" id="COG0503">
    <property type="taxonomic scope" value="Bacteria"/>
</dbReference>
<dbReference type="HOGENOM" id="CLU_063339_3_0_3"/>
<dbReference type="UniPathway" id="UPA00588">
    <property type="reaction ID" value="UER00646"/>
</dbReference>
<dbReference type="Proteomes" id="UP000002533">
    <property type="component" value="Chromosome"/>
</dbReference>
<dbReference type="GO" id="GO:0005737">
    <property type="term" value="C:cytoplasm"/>
    <property type="evidence" value="ECO:0007669"/>
    <property type="project" value="UniProtKB-SubCell"/>
</dbReference>
<dbReference type="GO" id="GO:0002055">
    <property type="term" value="F:adenine binding"/>
    <property type="evidence" value="ECO:0007669"/>
    <property type="project" value="TreeGrafter"/>
</dbReference>
<dbReference type="GO" id="GO:0003999">
    <property type="term" value="F:adenine phosphoribosyltransferase activity"/>
    <property type="evidence" value="ECO:0007669"/>
    <property type="project" value="UniProtKB-UniRule"/>
</dbReference>
<dbReference type="GO" id="GO:0016208">
    <property type="term" value="F:AMP binding"/>
    <property type="evidence" value="ECO:0007669"/>
    <property type="project" value="TreeGrafter"/>
</dbReference>
<dbReference type="GO" id="GO:0006168">
    <property type="term" value="P:adenine salvage"/>
    <property type="evidence" value="ECO:0007669"/>
    <property type="project" value="InterPro"/>
</dbReference>
<dbReference type="GO" id="GO:0044209">
    <property type="term" value="P:AMP salvage"/>
    <property type="evidence" value="ECO:0007669"/>
    <property type="project" value="UniProtKB-UniRule"/>
</dbReference>
<dbReference type="GO" id="GO:0006166">
    <property type="term" value="P:purine ribonucleoside salvage"/>
    <property type="evidence" value="ECO:0007669"/>
    <property type="project" value="UniProtKB-KW"/>
</dbReference>
<dbReference type="CDD" id="cd06223">
    <property type="entry name" value="PRTases_typeI"/>
    <property type="match status" value="1"/>
</dbReference>
<dbReference type="FunFam" id="3.40.50.2020:FF:000004">
    <property type="entry name" value="Adenine phosphoribosyltransferase"/>
    <property type="match status" value="1"/>
</dbReference>
<dbReference type="Gene3D" id="3.40.50.2020">
    <property type="match status" value="1"/>
</dbReference>
<dbReference type="HAMAP" id="MF_00004">
    <property type="entry name" value="Aden_phosphoribosyltr"/>
    <property type="match status" value="1"/>
</dbReference>
<dbReference type="InterPro" id="IPR005764">
    <property type="entry name" value="Ade_phspho_trans"/>
</dbReference>
<dbReference type="InterPro" id="IPR000836">
    <property type="entry name" value="PRibTrfase_dom"/>
</dbReference>
<dbReference type="InterPro" id="IPR029057">
    <property type="entry name" value="PRTase-like"/>
</dbReference>
<dbReference type="InterPro" id="IPR050054">
    <property type="entry name" value="UPRTase/APRTase"/>
</dbReference>
<dbReference type="NCBIfam" id="TIGR01090">
    <property type="entry name" value="apt"/>
    <property type="match status" value="1"/>
</dbReference>
<dbReference type="NCBIfam" id="NF002634">
    <property type="entry name" value="PRK02304.1-3"/>
    <property type="match status" value="1"/>
</dbReference>
<dbReference type="NCBIfam" id="NF002636">
    <property type="entry name" value="PRK02304.1-5"/>
    <property type="match status" value="1"/>
</dbReference>
<dbReference type="PANTHER" id="PTHR32315">
    <property type="entry name" value="ADENINE PHOSPHORIBOSYLTRANSFERASE"/>
    <property type="match status" value="1"/>
</dbReference>
<dbReference type="PANTHER" id="PTHR32315:SF3">
    <property type="entry name" value="ADENINE PHOSPHORIBOSYLTRANSFERASE"/>
    <property type="match status" value="1"/>
</dbReference>
<dbReference type="Pfam" id="PF00156">
    <property type="entry name" value="Pribosyltran"/>
    <property type="match status" value="1"/>
</dbReference>
<dbReference type="SUPFAM" id="SSF53271">
    <property type="entry name" value="PRTase-like"/>
    <property type="match status" value="1"/>
</dbReference>
<dbReference type="PROSITE" id="PS00103">
    <property type="entry name" value="PUR_PYR_PR_TRANSFER"/>
    <property type="match status" value="1"/>
</dbReference>